<feature type="chain" id="PRO_0000191785" description="Phosphatidylinositol N-acetylglucosaminyltransferase subunit P">
    <location>
        <begin position="1"/>
        <end position="134"/>
    </location>
</feature>
<feature type="transmembrane region" description="Helical" evidence="2">
    <location>
        <begin position="13"/>
        <end position="35"/>
    </location>
</feature>
<feature type="transmembrane region" description="Helical" evidence="2">
    <location>
        <begin position="55"/>
        <end position="77"/>
    </location>
</feature>
<feature type="sequence conflict" description="In Ref. 1; CAH91312." evidence="3" ref="1">
    <original>L</original>
    <variation>S</variation>
    <location>
        <position position="73"/>
    </location>
</feature>
<feature type="sequence conflict" description="In Ref. 1; CAH91312." evidence="3" ref="1">
    <original>R</original>
    <variation>Q</variation>
    <location>
        <position position="99"/>
    </location>
</feature>
<comment type="function">
    <text evidence="1">Part of the glycosylphosphatidylinositol-N-acetylglucosaminyltransferase (GPI-GnT) complex that catalyzes the transfer of N-acetylglucosamine from UDP-N-acetylglucosamine to phosphatidylinositol and participates in the first step of GPI biosynthesis.</text>
</comment>
<comment type="pathway">
    <text evidence="1">Glycolipid biosynthesis; glycosylphosphatidylinositol-anchor biosynthesis.</text>
</comment>
<comment type="subunit">
    <text evidence="1">Component of the glycosylphosphatidylinositol-N-acetylglucosaminyltransferase (GPI-GnT) complex composed at least by PIGA, PIGC, PIGH, PIGP, PIGQ, PIGY and DPM2. Interacts directly with PIGA and PIGQ.</text>
</comment>
<comment type="subcellular location">
    <subcellularLocation>
        <location evidence="3">Membrane</location>
        <topology evidence="3">Multi-pass membrane protein</topology>
    </subcellularLocation>
</comment>
<comment type="similarity">
    <text evidence="3">Belongs to the PIGP family.</text>
</comment>
<gene>
    <name evidence="1" type="primary">PIGP</name>
    <name type="synonym">DSCR5</name>
</gene>
<proteinExistence type="evidence at transcript level"/>
<reference key="1">
    <citation type="submission" date="2004-11" db="EMBL/GenBank/DDBJ databases">
        <authorList>
            <consortium name="The German cDNA consortium"/>
        </authorList>
    </citation>
    <scope>NUCLEOTIDE SEQUENCE [LARGE SCALE MRNA]</scope>
    <source>
        <tissue>Brain cortex</tissue>
    </source>
</reference>
<protein>
    <recommendedName>
        <fullName evidence="1">Phosphatidylinositol N-acetylglucosaminyltransferase subunit P</fullName>
    </recommendedName>
    <alternativeName>
        <fullName>Phosphatidylinositol-glycan biosynthesis class P protein</fullName>
        <shortName>PIG-P</shortName>
    </alternativeName>
</protein>
<evidence type="ECO:0000250" key="1">
    <source>
        <dbReference type="UniProtKB" id="P57054"/>
    </source>
</evidence>
<evidence type="ECO:0000255" key="2"/>
<evidence type="ECO:0000305" key="3"/>
<sequence>MVENSPSPLPERAIYGFVLFLSSQFGFILYLVWAFIPESWLNSLGLTYWPQKYWAVALPVYLLIAIVIGYVLLFGINMMSTSPLDSIHTITDNYARNQRQKKYQEEAIPALRDISISEVNQMFFLAAKELYTEN</sequence>
<dbReference type="EMBL" id="CR859549">
    <property type="protein sequence ID" value="CAH91714.1"/>
    <property type="molecule type" value="mRNA"/>
</dbReference>
<dbReference type="EMBL" id="CR859120">
    <property type="protein sequence ID" value="CAH91312.1"/>
    <property type="molecule type" value="mRNA"/>
</dbReference>
<dbReference type="RefSeq" id="NP_001127401.1">
    <property type="nucleotide sequence ID" value="NM_001133929.1"/>
</dbReference>
<dbReference type="FunCoup" id="Q5R946">
    <property type="interactions" value="462"/>
</dbReference>
<dbReference type="STRING" id="9601.ENSPPYP00000012734"/>
<dbReference type="GeneID" id="100174471"/>
<dbReference type="KEGG" id="pon:100174471"/>
<dbReference type="CTD" id="51227"/>
<dbReference type="eggNOG" id="KOG2257">
    <property type="taxonomic scope" value="Eukaryota"/>
</dbReference>
<dbReference type="InParanoid" id="Q5R946"/>
<dbReference type="OrthoDB" id="690928at2759"/>
<dbReference type="UniPathway" id="UPA00196"/>
<dbReference type="Proteomes" id="UP000001595">
    <property type="component" value="Unplaced"/>
</dbReference>
<dbReference type="GO" id="GO:0000506">
    <property type="term" value="C:glycosylphosphatidylinositol-N-acetylglucosaminyltransferase (GPI-GnT) complex"/>
    <property type="evidence" value="ECO:0000250"/>
    <property type="project" value="UniProtKB"/>
</dbReference>
<dbReference type="GO" id="GO:0017176">
    <property type="term" value="F:phosphatidylinositol N-acetylglucosaminyltransferase activity"/>
    <property type="evidence" value="ECO:0007669"/>
    <property type="project" value="InterPro"/>
</dbReference>
<dbReference type="GO" id="GO:0006506">
    <property type="term" value="P:GPI anchor biosynthetic process"/>
    <property type="evidence" value="ECO:0000250"/>
    <property type="project" value="UniProtKB"/>
</dbReference>
<dbReference type="InterPro" id="IPR052263">
    <property type="entry name" value="GPI_Anchor_Biosynth"/>
</dbReference>
<dbReference type="InterPro" id="IPR013717">
    <property type="entry name" value="PIG-P"/>
</dbReference>
<dbReference type="InterPro" id="IPR016542">
    <property type="entry name" value="PIG-P_GPI19"/>
</dbReference>
<dbReference type="PANTHER" id="PTHR46346">
    <property type="entry name" value="PHOSPHATIDYLINOSITOL N-ACETYLGLUCOSAMINYLTRANSFERASE SUBUNIT P"/>
    <property type="match status" value="1"/>
</dbReference>
<dbReference type="PANTHER" id="PTHR46346:SF1">
    <property type="entry name" value="PHOSPHATIDYLINOSITOL N-ACETYLGLUCOSAMINYLTRANSFERASE SUBUNIT P"/>
    <property type="match status" value="1"/>
</dbReference>
<dbReference type="Pfam" id="PF08510">
    <property type="entry name" value="PIG-P"/>
    <property type="match status" value="1"/>
</dbReference>
<dbReference type="PIRSF" id="PIRSF008765">
    <property type="entry name" value="PIG-P_GPI19"/>
    <property type="match status" value="1"/>
</dbReference>
<keyword id="KW-0328">Glycosyltransferase</keyword>
<keyword id="KW-0337">GPI-anchor biosynthesis</keyword>
<keyword id="KW-0472">Membrane</keyword>
<keyword id="KW-1185">Reference proteome</keyword>
<keyword id="KW-0808">Transferase</keyword>
<keyword id="KW-0812">Transmembrane</keyword>
<keyword id="KW-1133">Transmembrane helix</keyword>
<organism>
    <name type="scientific">Pongo abelii</name>
    <name type="common">Sumatran orangutan</name>
    <name type="synonym">Pongo pygmaeus abelii</name>
    <dbReference type="NCBI Taxonomy" id="9601"/>
    <lineage>
        <taxon>Eukaryota</taxon>
        <taxon>Metazoa</taxon>
        <taxon>Chordata</taxon>
        <taxon>Craniata</taxon>
        <taxon>Vertebrata</taxon>
        <taxon>Euteleostomi</taxon>
        <taxon>Mammalia</taxon>
        <taxon>Eutheria</taxon>
        <taxon>Euarchontoglires</taxon>
        <taxon>Primates</taxon>
        <taxon>Haplorrhini</taxon>
        <taxon>Catarrhini</taxon>
        <taxon>Hominidae</taxon>
        <taxon>Pongo</taxon>
    </lineage>
</organism>
<name>PIGP_PONAB</name>
<accession>Q5R946</accession>
<accession>Q5RA98</accession>